<protein>
    <recommendedName>
        <fullName evidence="6">Lachesicidin</fullName>
    </recommendedName>
    <alternativeName>
        <fullName evidence="6">Cathelicidin-related antimicrobial peptide</fullName>
        <shortName evidence="6">CRAMP</shortName>
    </alternativeName>
    <alternativeName>
        <fullName evidence="6">Vipericidin</fullName>
    </alternativeName>
</protein>
<evidence type="ECO:0000250" key="1"/>
<evidence type="ECO:0000250" key="2">
    <source>
        <dbReference type="UniProtKB" id="B6D434"/>
    </source>
</evidence>
<evidence type="ECO:0000250" key="3">
    <source>
        <dbReference type="UniProtKB" id="U5KJM4"/>
    </source>
</evidence>
<evidence type="ECO:0000255" key="4"/>
<evidence type="ECO:0000256" key="5">
    <source>
        <dbReference type="SAM" id="MobiDB-lite"/>
    </source>
</evidence>
<evidence type="ECO:0000303" key="6">
    <source>
    </source>
</evidence>
<evidence type="ECO:0000305" key="7"/>
<evidence type="ECO:0000305" key="8">
    <source>
    </source>
</evidence>
<keyword id="KW-0044">Antibiotic</keyword>
<keyword id="KW-0929">Antimicrobial</keyword>
<keyword id="KW-0165">Cleavage on pair of basic residues</keyword>
<keyword id="KW-1015">Disulfide bond</keyword>
<keyword id="KW-0472">Membrane</keyword>
<keyword id="KW-0964">Secreted</keyword>
<keyword id="KW-0732">Signal</keyword>
<keyword id="KW-1052">Target cell membrane</keyword>
<keyword id="KW-1053">Target membrane</keyword>
<reference key="1">
    <citation type="journal article" date="2014" name="Amino Acids">
        <title>Vipericidins: a novel family of cathelicidin-related peptides from the venom gland of South American pit vipers.</title>
        <authorList>
            <person name="Falcao C.B."/>
            <person name="de La Torre B.G."/>
            <person name="Perez-Peinado C."/>
            <person name="Barron A.E."/>
            <person name="Andreu D."/>
            <person name="Radis-Baptista G."/>
        </authorList>
    </citation>
    <scope>NUCLEOTIDE SEQUENCE [MRNA]</scope>
    <source>
        <tissue>Venom gland</tissue>
    </source>
</reference>
<comment type="function">
    <text evidence="3">Potent antimicrobial peptide against Gram-negative and Gram-positive bacteria. Adopts an amphipathic alpha helical conformation, that may allow to partition into the target membrane. Low hemolytic activities have been observed on mammalian cells.</text>
</comment>
<comment type="subcellular location">
    <subcellularLocation>
        <location evidence="2">Secreted</location>
    </subcellularLocation>
    <subcellularLocation>
        <location evidence="2">Target cell membrane</location>
    </subcellularLocation>
    <text evidence="2">Forms a helical membrane channel in the prey.</text>
</comment>
<comment type="tissue specificity">
    <text evidence="8">Expressed by the venom gland.</text>
</comment>
<comment type="miscellaneous">
    <text evidence="8">The putative mature sequence has been predicted by AMPA, a predictive algorithm for identification of peptide stretches with antimicrobial properties.</text>
</comment>
<comment type="similarity">
    <text evidence="7">Belongs to the cathelicidin family.</text>
</comment>
<proteinExistence type="evidence at transcript level"/>
<dbReference type="EMBL" id="JX948113">
    <property type="protein sequence ID" value="AGS36142.1"/>
    <property type="molecule type" value="mRNA"/>
</dbReference>
<dbReference type="SMR" id="U5KJZ2"/>
<dbReference type="GO" id="GO:0005615">
    <property type="term" value="C:extracellular space"/>
    <property type="evidence" value="ECO:0007669"/>
    <property type="project" value="TreeGrafter"/>
</dbReference>
<dbReference type="GO" id="GO:0016020">
    <property type="term" value="C:membrane"/>
    <property type="evidence" value="ECO:0007669"/>
    <property type="project" value="UniProtKB-KW"/>
</dbReference>
<dbReference type="GO" id="GO:0044218">
    <property type="term" value="C:other organism cell membrane"/>
    <property type="evidence" value="ECO:0007669"/>
    <property type="project" value="UniProtKB-KW"/>
</dbReference>
<dbReference type="GO" id="GO:0042742">
    <property type="term" value="P:defense response to bacterium"/>
    <property type="evidence" value="ECO:0007669"/>
    <property type="project" value="UniProtKB-KW"/>
</dbReference>
<dbReference type="FunFam" id="3.10.450.10:FF:000034">
    <property type="entry name" value="Cathelicidin-related peptide Oh-Cath"/>
    <property type="match status" value="1"/>
</dbReference>
<dbReference type="Gene3D" id="3.10.450.10">
    <property type="match status" value="1"/>
</dbReference>
<dbReference type="InterPro" id="IPR001894">
    <property type="entry name" value="Cathelicidin-like"/>
</dbReference>
<dbReference type="InterPro" id="IPR046350">
    <property type="entry name" value="Cystatin_sf"/>
</dbReference>
<dbReference type="PANTHER" id="PTHR10206">
    <property type="entry name" value="CATHELICIDIN"/>
    <property type="match status" value="1"/>
</dbReference>
<dbReference type="PANTHER" id="PTHR10206:SF4">
    <property type="entry name" value="NEUTROPHILIC GRANULE PROTEIN"/>
    <property type="match status" value="1"/>
</dbReference>
<dbReference type="Pfam" id="PF00666">
    <property type="entry name" value="Cathelicidins"/>
    <property type="match status" value="1"/>
</dbReference>
<dbReference type="SUPFAM" id="SSF54403">
    <property type="entry name" value="Cystatin/monellin"/>
    <property type="match status" value="1"/>
</dbReference>
<name>CAMP_LACMR</name>
<organism>
    <name type="scientific">Lachesis muta rhombeata</name>
    <name type="common">Bushmaster</name>
    <dbReference type="NCBI Taxonomy" id="60219"/>
    <lineage>
        <taxon>Eukaryota</taxon>
        <taxon>Metazoa</taxon>
        <taxon>Chordata</taxon>
        <taxon>Craniata</taxon>
        <taxon>Vertebrata</taxon>
        <taxon>Euteleostomi</taxon>
        <taxon>Lepidosauria</taxon>
        <taxon>Squamata</taxon>
        <taxon>Bifurcata</taxon>
        <taxon>Unidentata</taxon>
        <taxon>Episquamata</taxon>
        <taxon>Toxicofera</taxon>
        <taxon>Serpentes</taxon>
        <taxon>Colubroidea</taxon>
        <taxon>Viperidae</taxon>
        <taxon>Crotalinae</taxon>
        <taxon>Lachesis</taxon>
    </lineage>
</organism>
<feature type="signal peptide" evidence="4">
    <location>
        <begin position="1"/>
        <end position="22"/>
    </location>
</feature>
<feature type="propeptide" id="PRO_0000432137" evidence="8">
    <location>
        <begin position="23"/>
        <end position="160"/>
    </location>
</feature>
<feature type="peptide" id="PRO_0000432138" description="Lachesicidin" evidence="8">
    <location>
        <begin position="161"/>
        <end position="194"/>
    </location>
</feature>
<feature type="region of interest" description="Disordered" evidence="5">
    <location>
        <begin position="125"/>
        <end position="157"/>
    </location>
</feature>
<feature type="compositionally biased region" description="Acidic residues" evidence="5">
    <location>
        <begin position="125"/>
        <end position="154"/>
    </location>
</feature>
<feature type="disulfide bond" evidence="1">
    <location>
        <begin position="79"/>
        <end position="90"/>
    </location>
</feature>
<feature type="disulfide bond" evidence="1">
    <location>
        <begin position="101"/>
        <end position="118"/>
    </location>
</feature>
<accession>U5KJZ2</accession>
<sequence length="194" mass="22112">MQGFFWKTWLVLAVCGTPASLAHRPLSYGEALELAVSVYNGKAGEASLYRLLEAVPQPEWDPSSEGSQQLNFTLKETACQVEEERSLEECGFQEDGVVLECTGYYFFGETPPVVVLSCVPVGGVEEEEEEEEEEQKAEAENDEEVEKEKEDEEKDQPKRVKRFKKFFKKVKKSVKKRLKKIFKKPMVIGVTFPF</sequence>